<gene>
    <name type="primary">LC2</name>
</gene>
<accession>P0C8J5</accession>
<proteinExistence type="evidence at protein level"/>
<keyword id="KW-1204">Blood coagulation cascade activating toxin</keyword>
<keyword id="KW-0106">Calcium</keyword>
<keyword id="KW-0903">Direct protein sequencing</keyword>
<keyword id="KW-1015">Disulfide bond</keyword>
<keyword id="KW-0325">Glycoprotein</keyword>
<keyword id="KW-1199">Hemostasis impairing toxin</keyword>
<keyword id="KW-0479">Metal-binding</keyword>
<keyword id="KW-0964">Secreted</keyword>
<keyword id="KW-0800">Toxin</keyword>
<protein>
    <recommendedName>
        <fullName>Snaclec factor X-activator 2 light chain 2</fullName>
        <shortName>VAFXA-II LC2</shortName>
    </recommendedName>
</protein>
<feature type="chain" id="PRO_0000355315" description="Snaclec factor X-activator 2 light chain 2">
    <location>
        <begin position="1"/>
        <end position="16" status="greater than"/>
    </location>
</feature>
<feature type="domain" description="C-type lectin" evidence="2">
    <location>
        <begin position="11"/>
        <end position="16" status="greater than"/>
    </location>
</feature>
<feature type="disulfide bond" evidence="2">
    <location>
        <begin position="4"/>
        <end position="15"/>
    </location>
</feature>
<feature type="unsure residue" description="Assigned by comparison with orthologs">
    <location>
        <position position="15"/>
    </location>
</feature>
<feature type="non-terminal residue">
    <location>
        <position position="16"/>
    </location>
</feature>
<organism>
    <name type="scientific">Vipera ammodytes ammodytes</name>
    <name type="common">Western sand viper</name>
    <dbReference type="NCBI Taxonomy" id="8705"/>
    <lineage>
        <taxon>Eukaryota</taxon>
        <taxon>Metazoa</taxon>
        <taxon>Chordata</taxon>
        <taxon>Craniata</taxon>
        <taxon>Vertebrata</taxon>
        <taxon>Euteleostomi</taxon>
        <taxon>Lepidosauria</taxon>
        <taxon>Squamata</taxon>
        <taxon>Bifurcata</taxon>
        <taxon>Unidentata</taxon>
        <taxon>Episquamata</taxon>
        <taxon>Toxicofera</taxon>
        <taxon>Serpentes</taxon>
        <taxon>Colubroidea</taxon>
        <taxon>Viperidae</taxon>
        <taxon>Viperinae</taxon>
        <taxon>Vipera</taxon>
    </lineage>
</organism>
<comment type="function">
    <text>Regulatory subunit of the blood coagulation factor X-activating enzyme. Activates coagulation factor X (F10) in a calcium-dependent manner by cleaving the Arg-Ile bond at position 234. Weakly hydrolyzes insulin B chain, fibrinogen and some components of the extracellular matrix in vitro, but does not activate prothrombin or plasminogen.</text>
</comment>
<comment type="subunit">
    <text>Heterotrimer; disulfide-linked. The heterotrimer consists of 1 heavy chain (a metalloproteinase) and 2 light chains: LC1 and LC2.</text>
</comment>
<comment type="subcellular location">
    <subcellularLocation>
        <location>Secreted</location>
    </subcellularLocation>
</comment>
<comment type="tissue specificity">
    <text>Expressed by the venom gland.</text>
</comment>
<comment type="PTM">
    <text evidence="1">N-glycosylated.</text>
</comment>
<comment type="miscellaneous">
    <text>Calcium is required for ligand binding.</text>
</comment>
<comment type="similarity">
    <text evidence="3">Belongs to the snaclec family.</text>
</comment>
<name>SL2C2_VIPAA</name>
<dbReference type="GO" id="GO:0005576">
    <property type="term" value="C:extracellular region"/>
    <property type="evidence" value="ECO:0007669"/>
    <property type="project" value="UniProtKB-SubCell"/>
</dbReference>
<dbReference type="GO" id="GO:0046872">
    <property type="term" value="F:metal ion binding"/>
    <property type="evidence" value="ECO:0007669"/>
    <property type="project" value="UniProtKB-KW"/>
</dbReference>
<dbReference type="GO" id="GO:0090729">
    <property type="term" value="F:toxin activity"/>
    <property type="evidence" value="ECO:0007669"/>
    <property type="project" value="UniProtKB-KW"/>
</dbReference>
<evidence type="ECO:0000250" key="1"/>
<evidence type="ECO:0000255" key="2">
    <source>
        <dbReference type="PROSITE-ProRule" id="PRU00040"/>
    </source>
</evidence>
<evidence type="ECO:0000305" key="3"/>
<sequence>AFCCPSGWSAYDQNCY</sequence>
<reference key="1">
    <citation type="journal article" date="2008" name="Toxicon">
        <title>Two coagulation factor X activators from Vipera a. ammodytes venom with potential to treat patients with dysfunctional factors IXa or VIIa.</title>
        <authorList>
            <person name="Leonardi A."/>
            <person name="Fox J.W."/>
            <person name="Trampus-Bakija A."/>
            <person name="Krizaj I."/>
        </authorList>
    </citation>
    <scope>PROTEIN SEQUENCE</scope>
    <source>
        <tissue>Venom</tissue>
    </source>
</reference>